<evidence type="ECO:0000269" key="1">
    <source>
    </source>
</evidence>
<evidence type="ECO:0000269" key="2">
    <source>
    </source>
</evidence>
<evidence type="ECO:0000305" key="3"/>
<protein>
    <recommendedName>
        <fullName>Protein PET122, mitochondrial</fullName>
    </recommendedName>
</protein>
<gene>
    <name type="primary">PET122</name>
    <name type="ordered locus">YER153C</name>
</gene>
<feature type="transit peptide" description="Mitochondrion" evidence="2">
    <location>
        <begin position="1"/>
        <end position="8"/>
    </location>
</feature>
<feature type="chain" id="PRO_0000022177" description="Protein PET122, mitochondrial">
    <location>
        <begin position="9"/>
        <end position="254"/>
    </location>
</feature>
<feature type="region of interest" description="Essential for PET122 function">
    <location>
        <begin position="185"/>
        <end position="254"/>
    </location>
</feature>
<comment type="function">
    <text>Required for expression of the mitochondrial gene for cytochrome c oxidase subunit 3 (COX3). PET122 seems to work by directly interacting with the small ribosomal subunit to promote translation initiation on the COX3 mRNA.</text>
</comment>
<comment type="subcellular location">
    <subcellularLocation>
        <location evidence="2">Mitochondrion inner membrane</location>
        <topology evidence="2">Peripheral membrane protein</topology>
    </subcellularLocation>
</comment>
<comment type="miscellaneous">
    <text evidence="1">Present with 468 molecules/cell in log phase SD medium.</text>
</comment>
<comment type="sequence caution" evidence="3">
    <conflict type="frameshift">
        <sequence resource="EMBL-CDS" id="CAA30439"/>
    </conflict>
</comment>
<reference key="1">
    <citation type="journal article" date="1988" name="Nucleic Acids Res.">
        <title>Molecular cloning and nucleotide sequence of the nuclear PET122 gene required for expression of the mitochondrial COX3 gene in S. cerevisiae.</title>
        <authorList>
            <person name="Ohmen J.D."/>
            <person name="Kloeckener-Gruissem B."/>
            <person name="McEwen J.E."/>
        </authorList>
    </citation>
    <scope>NUCLEOTIDE SEQUENCE [GENOMIC DNA]</scope>
    <source>
        <strain>ATCC 204510 / AB320</strain>
    </source>
</reference>
<reference key="2">
    <citation type="journal article" date="1990" name="Mol. Cell. Biol.">
        <title>Divergent overlapping transcripts at the PET122 locus in Saccharomyces cerevisiae.</title>
        <authorList>
            <person name="Ohmen J.D."/>
            <person name="Burke K.A."/>
            <person name="McEwen J.E."/>
        </authorList>
    </citation>
    <scope>NUCLEOTIDE SEQUENCE [GENOMIC DNA]</scope>
    <scope>SEQUENCE REVISION</scope>
</reference>
<reference key="3">
    <citation type="journal article" date="1997" name="Nature">
        <title>The nucleotide sequence of Saccharomyces cerevisiae chromosome V.</title>
        <authorList>
            <person name="Dietrich F.S."/>
            <person name="Mulligan J.T."/>
            <person name="Hennessy K.M."/>
            <person name="Yelton M.A."/>
            <person name="Allen E."/>
            <person name="Araujo R."/>
            <person name="Aviles E."/>
            <person name="Berno A."/>
            <person name="Brennan T."/>
            <person name="Carpenter J."/>
            <person name="Chen E."/>
            <person name="Cherry J.M."/>
            <person name="Chung E."/>
            <person name="Duncan M."/>
            <person name="Guzman E."/>
            <person name="Hartzell G."/>
            <person name="Hunicke-Smith S."/>
            <person name="Hyman R.W."/>
            <person name="Kayser A."/>
            <person name="Komp C."/>
            <person name="Lashkari D."/>
            <person name="Lew H."/>
            <person name="Lin D."/>
            <person name="Mosedale D."/>
            <person name="Nakahara K."/>
            <person name="Namath A."/>
            <person name="Norgren R."/>
            <person name="Oefner P."/>
            <person name="Oh C."/>
            <person name="Petel F.X."/>
            <person name="Roberts D."/>
            <person name="Sehl P."/>
            <person name="Schramm S."/>
            <person name="Shogren T."/>
            <person name="Smith V."/>
            <person name="Taylor P."/>
            <person name="Wei Y."/>
            <person name="Botstein D."/>
            <person name="Davis R.W."/>
        </authorList>
    </citation>
    <scope>NUCLEOTIDE SEQUENCE [LARGE SCALE GENOMIC DNA]</scope>
    <source>
        <strain>ATCC 204508 / S288c</strain>
    </source>
</reference>
<reference key="4">
    <citation type="journal article" date="2014" name="G3 (Bethesda)">
        <title>The reference genome sequence of Saccharomyces cerevisiae: Then and now.</title>
        <authorList>
            <person name="Engel S.R."/>
            <person name="Dietrich F.S."/>
            <person name="Fisk D.G."/>
            <person name="Binkley G."/>
            <person name="Balakrishnan R."/>
            <person name="Costanzo M.C."/>
            <person name="Dwight S.S."/>
            <person name="Hitz B.C."/>
            <person name="Karra K."/>
            <person name="Nash R.S."/>
            <person name="Weng S."/>
            <person name="Wong E.D."/>
            <person name="Lloyd P."/>
            <person name="Skrzypek M.S."/>
            <person name="Miyasato S.R."/>
            <person name="Simison M."/>
            <person name="Cherry J.M."/>
        </authorList>
    </citation>
    <scope>GENOME REANNOTATION</scope>
    <source>
        <strain>ATCC 204508 / S288c</strain>
    </source>
</reference>
<reference key="5">
    <citation type="journal article" date="2007" name="Genome Res.">
        <title>Approaching a complete repository of sequence-verified protein-encoding clones for Saccharomyces cerevisiae.</title>
        <authorList>
            <person name="Hu Y."/>
            <person name="Rolfs A."/>
            <person name="Bhullar B."/>
            <person name="Murthy T.V.S."/>
            <person name="Zhu C."/>
            <person name="Berger M.F."/>
            <person name="Camargo A.A."/>
            <person name="Kelley F."/>
            <person name="McCarron S."/>
            <person name="Jepson D."/>
            <person name="Richardson A."/>
            <person name="Raphael J."/>
            <person name="Moreira D."/>
            <person name="Taycher E."/>
            <person name="Zuo D."/>
            <person name="Mohr S."/>
            <person name="Kane M.F."/>
            <person name="Williamson J."/>
            <person name="Simpson A.J.G."/>
            <person name="Bulyk M.L."/>
            <person name="Harlow E."/>
            <person name="Marsischky G."/>
            <person name="Kolodner R.D."/>
            <person name="LaBaer J."/>
        </authorList>
    </citation>
    <scope>NUCLEOTIDE SEQUENCE [GENOMIC DNA]</scope>
    <source>
        <strain>ATCC 204508 / S288c</strain>
    </source>
</reference>
<reference key="6">
    <citation type="journal article" date="1993" name="J. Biol. Chem.">
        <title>COX3 mRNA-specific translational activator proteins are associated with the inner mitochondrial membrane in Saccharomyces cerevisiae.</title>
        <authorList>
            <person name="McMullin T.W."/>
            <person name="Fox T.D."/>
        </authorList>
    </citation>
    <scope>PROTEIN SEQUENCE OF 9-19</scope>
    <scope>SUBCELLULAR LOCATION</scope>
</reference>
<reference key="7">
    <citation type="journal article" date="2003" name="Nature">
        <title>Global analysis of protein expression in yeast.</title>
        <authorList>
            <person name="Ghaemmaghami S."/>
            <person name="Huh W.-K."/>
            <person name="Bower K."/>
            <person name="Howson R.W."/>
            <person name="Belle A."/>
            <person name="Dephoure N."/>
            <person name="O'Shea E.K."/>
            <person name="Weissman J.S."/>
        </authorList>
    </citation>
    <scope>LEVEL OF PROTEIN EXPRESSION [LARGE SCALE ANALYSIS]</scope>
</reference>
<accession>P10355</accession>
<accession>D3DM60</accession>
<name>PT122_YEAST</name>
<dbReference type="EMBL" id="X07558">
    <property type="protein sequence ID" value="CAA30439.1"/>
    <property type="status" value="ALT_FRAME"/>
    <property type="molecule type" value="Genomic_DNA"/>
</dbReference>
<dbReference type="EMBL" id="U18917">
    <property type="protein sequence ID" value="AAB64680.1"/>
    <property type="molecule type" value="Genomic_DNA"/>
</dbReference>
<dbReference type="EMBL" id="AY557785">
    <property type="protein sequence ID" value="AAS56111.1"/>
    <property type="molecule type" value="Genomic_DNA"/>
</dbReference>
<dbReference type="EMBL" id="BK006939">
    <property type="protein sequence ID" value="DAA07814.1"/>
    <property type="molecule type" value="Genomic_DNA"/>
</dbReference>
<dbReference type="PIR" id="B36328">
    <property type="entry name" value="BVBY22"/>
</dbReference>
<dbReference type="RefSeq" id="NP_011080.1">
    <property type="nucleotide sequence ID" value="NM_001179043.1"/>
</dbReference>
<dbReference type="BioGRID" id="36903">
    <property type="interactions" value="224"/>
</dbReference>
<dbReference type="DIP" id="DIP-5415N"/>
<dbReference type="FunCoup" id="P10355">
    <property type="interactions" value="63"/>
</dbReference>
<dbReference type="IntAct" id="P10355">
    <property type="interactions" value="2"/>
</dbReference>
<dbReference type="MINT" id="P10355"/>
<dbReference type="STRING" id="4932.YER153C"/>
<dbReference type="PaxDb" id="4932-YER153C"/>
<dbReference type="PeptideAtlas" id="P10355"/>
<dbReference type="EnsemblFungi" id="YER153C_mRNA">
    <property type="protein sequence ID" value="YER153C"/>
    <property type="gene ID" value="YER153C"/>
</dbReference>
<dbReference type="GeneID" id="856897"/>
<dbReference type="KEGG" id="sce:YER153C"/>
<dbReference type="AGR" id="SGD:S000000955"/>
<dbReference type="SGD" id="S000000955">
    <property type="gene designation" value="PET122"/>
</dbReference>
<dbReference type="VEuPathDB" id="FungiDB:YER153C"/>
<dbReference type="eggNOG" id="ENOG502RYT2">
    <property type="taxonomic scope" value="Eukaryota"/>
</dbReference>
<dbReference type="HOGENOM" id="CLU_084817_0_0_1"/>
<dbReference type="InParanoid" id="P10355"/>
<dbReference type="OMA" id="KSCQWGH"/>
<dbReference type="OrthoDB" id="4031898at2759"/>
<dbReference type="BioCyc" id="YEAST:G3O-30314-MONOMER"/>
<dbReference type="BioGRID-ORCS" id="856897">
    <property type="hits" value="8 hits in 10 CRISPR screens"/>
</dbReference>
<dbReference type="PRO" id="PR:P10355"/>
<dbReference type="Proteomes" id="UP000002311">
    <property type="component" value="Chromosome V"/>
</dbReference>
<dbReference type="RNAct" id="P10355">
    <property type="molecule type" value="protein"/>
</dbReference>
<dbReference type="GO" id="GO:0005743">
    <property type="term" value="C:mitochondrial inner membrane"/>
    <property type="evidence" value="ECO:0000314"/>
    <property type="project" value="SGD"/>
</dbReference>
<dbReference type="GO" id="GO:0005739">
    <property type="term" value="C:mitochondrion"/>
    <property type="evidence" value="ECO:0007005"/>
    <property type="project" value="SGD"/>
</dbReference>
<dbReference type="GO" id="GO:0003743">
    <property type="term" value="F:translation initiation factor activity"/>
    <property type="evidence" value="ECO:0000315"/>
    <property type="project" value="SGD"/>
</dbReference>
<dbReference type="GO" id="GO:0033617">
    <property type="term" value="P:mitochondrial cytochrome c oxidase assembly"/>
    <property type="evidence" value="ECO:0000315"/>
    <property type="project" value="SGD"/>
</dbReference>
<dbReference type="GO" id="GO:0070131">
    <property type="term" value="P:positive regulation of mitochondrial translation"/>
    <property type="evidence" value="ECO:0000315"/>
    <property type="project" value="SGD"/>
</dbReference>
<dbReference type="InterPro" id="IPR008732">
    <property type="entry name" value="Pet122"/>
</dbReference>
<dbReference type="Pfam" id="PF05476">
    <property type="entry name" value="PET122"/>
    <property type="match status" value="1"/>
</dbReference>
<dbReference type="PIRSF" id="PIRSF003326">
    <property type="entry name" value="PET122"/>
    <property type="match status" value="1"/>
</dbReference>
<sequence length="254" mass="29155">MLTITKRLVTTDVRSRILLSSLNGKMSDALALLRQQQQTSVDVELLHTMLARAAALAHADTIAYMWYQHVMPRRLPVEGRLLCEMAGVALYQDRLFLPAQFLQHYQAMNRDRRTSPEDELIEYELRRIKVEAFARGTMHSTALREKWKVFLQEMDTLPGQPPLRLRDFPQMTKAMGIALMQQDEQAAALALFGRQPLVIKNEWSLPLLLAGVLWHVPGPAQARRVLAEFRQSYRGLPLLDAELVIKRRGFEINT</sequence>
<proteinExistence type="evidence at protein level"/>
<organism>
    <name type="scientific">Saccharomyces cerevisiae (strain ATCC 204508 / S288c)</name>
    <name type="common">Baker's yeast</name>
    <dbReference type="NCBI Taxonomy" id="559292"/>
    <lineage>
        <taxon>Eukaryota</taxon>
        <taxon>Fungi</taxon>
        <taxon>Dikarya</taxon>
        <taxon>Ascomycota</taxon>
        <taxon>Saccharomycotina</taxon>
        <taxon>Saccharomycetes</taxon>
        <taxon>Saccharomycetales</taxon>
        <taxon>Saccharomycetaceae</taxon>
        <taxon>Saccharomyces</taxon>
    </lineage>
</organism>
<keyword id="KW-0010">Activator</keyword>
<keyword id="KW-0903">Direct protein sequencing</keyword>
<keyword id="KW-0472">Membrane</keyword>
<keyword id="KW-0496">Mitochondrion</keyword>
<keyword id="KW-0999">Mitochondrion inner membrane</keyword>
<keyword id="KW-1185">Reference proteome</keyword>
<keyword id="KW-0809">Transit peptide</keyword>
<keyword id="KW-0810">Translation regulation</keyword>